<feature type="chain" id="PRO_0000099170" description="Viral late gene transcription factor 2">
    <location>
        <begin position="1"/>
        <end position="150"/>
    </location>
</feature>
<proteinExistence type="evidence at transcript level"/>
<accession>O57216</accession>
<reference key="1">
    <citation type="journal article" date="1998" name="Virology">
        <title>The complete genomic sequence of the modified vaccinia Ankara strain: comparison with other orthopoxviruses.</title>
        <authorList>
            <person name="Antoine G."/>
            <person name="Scheiflinger F."/>
            <person name="Dorner F."/>
            <person name="Falkner F.G."/>
        </authorList>
    </citation>
    <scope>NUCLEOTIDE SEQUENCE [LARGE SCALE GENOMIC DNA]</scope>
</reference>
<reference key="2">
    <citation type="submission" date="2004-04" db="EMBL/GenBank/DDBJ databases">
        <authorList>
            <person name="Esposito J.J."/>
            <person name="Frace M."/>
            <person name="Sammons S.A."/>
            <person name="Olsen-Rasmussen M.S."/>
            <person name="Osborne J."/>
            <person name="Khristova M."/>
            <person name="Wohlhueter R.M."/>
        </authorList>
    </citation>
    <scope>NUCLEOTIDE SEQUENCE [LARGE SCALE GENOMIC DNA]</scope>
    <source>
        <strain>Isolate Acambis 3000</strain>
    </source>
</reference>
<sequence>MAKRVSLPDVVISAPKAVFKPAKEEALACILPKYYKSMADVSIKTNSVIDKCWFCNQDLVFRPISIETFKGGEVGYFCSKICRDSLASMVKSHVALREEPKISLLPLVFYEDKEKVINTINLLRDKDGVYGSCYFKENSQIIDISLRSLL</sequence>
<name>VLTF2_VACCA</name>
<comment type="function">
    <text evidence="1">Acts with RNA polymerase to initiate transcription from late gene promoters.</text>
</comment>
<comment type="subunit">
    <text evidence="1">Interacts with itself. Interacts with the late transcription factors VLTF-1 (By similarity).</text>
</comment>
<comment type="developmental stage">
    <text>Intermediate stages of infection.</text>
</comment>
<comment type="similarity">
    <text evidence="2">Belongs to the chordopoxvirinae VLTF-2 family.</text>
</comment>
<evidence type="ECO:0000250" key="1"/>
<evidence type="ECO:0000305" key="2"/>
<gene>
    <name type="primary">VLTF2</name>
    <name type="ordered locus">MVA111L</name>
    <name type="ordered locus">ACAM3000_MVA_111</name>
</gene>
<organismHost>
    <name type="scientific">Homo sapiens</name>
    <name type="common">Human</name>
    <dbReference type="NCBI Taxonomy" id="9606"/>
</organismHost>
<organism>
    <name type="scientific">Vaccinia virus (strain Ankara)</name>
    <name type="common">VACV</name>
    <dbReference type="NCBI Taxonomy" id="126794"/>
    <lineage>
        <taxon>Viruses</taxon>
        <taxon>Varidnaviria</taxon>
        <taxon>Bamfordvirae</taxon>
        <taxon>Nucleocytoviricota</taxon>
        <taxon>Pokkesviricetes</taxon>
        <taxon>Chitovirales</taxon>
        <taxon>Poxviridae</taxon>
        <taxon>Chordopoxvirinae</taxon>
        <taxon>Orthopoxvirus</taxon>
        <taxon>Vaccinia virus</taxon>
    </lineage>
</organism>
<protein>
    <recommendedName>
        <fullName>Viral late gene transcription factor 2</fullName>
        <shortName>VLTF-2</shortName>
    </recommendedName>
    <alternativeName>
        <fullName>Trans-activator protein A1</fullName>
    </alternativeName>
</protein>
<dbReference type="EMBL" id="U94848">
    <property type="protein sequence ID" value="AAB96454.1"/>
    <property type="molecule type" value="Genomic_DNA"/>
</dbReference>
<dbReference type="EMBL" id="AY603355">
    <property type="protein sequence ID" value="AAT10509.1"/>
    <property type="molecule type" value="Genomic_DNA"/>
</dbReference>
<dbReference type="PIR" id="T37387">
    <property type="entry name" value="T37387"/>
</dbReference>
<dbReference type="Proteomes" id="UP000159908">
    <property type="component" value="Segment"/>
</dbReference>
<dbReference type="Proteomes" id="UP000172909">
    <property type="component" value="Segment"/>
</dbReference>
<dbReference type="GO" id="GO:0008270">
    <property type="term" value="F:zinc ion binding"/>
    <property type="evidence" value="ECO:0007669"/>
    <property type="project" value="InterPro"/>
</dbReference>
<dbReference type="InterPro" id="IPR004975">
    <property type="entry name" value="Poxvirus_VLTF2"/>
</dbReference>
<dbReference type="InterPro" id="IPR010507">
    <property type="entry name" value="Znf_MYM"/>
</dbReference>
<dbReference type="Pfam" id="PF03295">
    <property type="entry name" value="Pox_TAA1"/>
    <property type="match status" value="1"/>
</dbReference>
<dbReference type="Pfam" id="PF06467">
    <property type="entry name" value="zf-FCS"/>
    <property type="match status" value="1"/>
</dbReference>